<feature type="chain" id="PRO_1000139691" description="N-acetylmannosamine kinase">
    <location>
        <begin position="1"/>
        <end position="291"/>
    </location>
</feature>
<feature type="binding site" evidence="1">
    <location>
        <begin position="5"/>
        <end position="12"/>
    </location>
    <ligand>
        <name>ATP</name>
        <dbReference type="ChEBI" id="CHEBI:30616"/>
    </ligand>
</feature>
<feature type="binding site" evidence="1">
    <location>
        <begin position="132"/>
        <end position="139"/>
    </location>
    <ligand>
        <name>ATP</name>
        <dbReference type="ChEBI" id="CHEBI:30616"/>
    </ligand>
</feature>
<feature type="binding site" evidence="1">
    <location>
        <position position="156"/>
    </location>
    <ligand>
        <name>Zn(2+)</name>
        <dbReference type="ChEBI" id="CHEBI:29105"/>
    </ligand>
</feature>
<feature type="binding site" evidence="1">
    <location>
        <position position="166"/>
    </location>
    <ligand>
        <name>Zn(2+)</name>
        <dbReference type="ChEBI" id="CHEBI:29105"/>
    </ligand>
</feature>
<feature type="binding site" evidence="1">
    <location>
        <position position="168"/>
    </location>
    <ligand>
        <name>Zn(2+)</name>
        <dbReference type="ChEBI" id="CHEBI:29105"/>
    </ligand>
</feature>
<feature type="binding site" evidence="1">
    <location>
        <position position="173"/>
    </location>
    <ligand>
        <name>Zn(2+)</name>
        <dbReference type="ChEBI" id="CHEBI:29105"/>
    </ligand>
</feature>
<accession>B5RET4</accession>
<organism>
    <name type="scientific">Salmonella gallinarum (strain 287/91 / NCTC 13346)</name>
    <dbReference type="NCBI Taxonomy" id="550538"/>
    <lineage>
        <taxon>Bacteria</taxon>
        <taxon>Pseudomonadati</taxon>
        <taxon>Pseudomonadota</taxon>
        <taxon>Gammaproteobacteria</taxon>
        <taxon>Enterobacterales</taxon>
        <taxon>Enterobacteriaceae</taxon>
        <taxon>Salmonella</taxon>
    </lineage>
</organism>
<evidence type="ECO:0000255" key="1">
    <source>
        <dbReference type="HAMAP-Rule" id="MF_01234"/>
    </source>
</evidence>
<reference key="1">
    <citation type="journal article" date="2008" name="Genome Res.">
        <title>Comparative genome analysis of Salmonella enteritidis PT4 and Salmonella gallinarum 287/91 provides insights into evolutionary and host adaptation pathways.</title>
        <authorList>
            <person name="Thomson N.R."/>
            <person name="Clayton D.J."/>
            <person name="Windhorst D."/>
            <person name="Vernikos G."/>
            <person name="Davidson S."/>
            <person name="Churcher C."/>
            <person name="Quail M.A."/>
            <person name="Stevens M."/>
            <person name="Jones M.A."/>
            <person name="Watson M."/>
            <person name="Barron A."/>
            <person name="Layton A."/>
            <person name="Pickard D."/>
            <person name="Kingsley R.A."/>
            <person name="Bignell A."/>
            <person name="Clark L."/>
            <person name="Harris B."/>
            <person name="Ormond D."/>
            <person name="Abdellah Z."/>
            <person name="Brooks K."/>
            <person name="Cherevach I."/>
            <person name="Chillingworth T."/>
            <person name="Woodward J."/>
            <person name="Norberczak H."/>
            <person name="Lord A."/>
            <person name="Arrowsmith C."/>
            <person name="Jagels K."/>
            <person name="Moule S."/>
            <person name="Mungall K."/>
            <person name="Saunders M."/>
            <person name="Whitehead S."/>
            <person name="Chabalgoity J.A."/>
            <person name="Maskell D."/>
            <person name="Humphreys T."/>
            <person name="Roberts M."/>
            <person name="Barrow P.A."/>
            <person name="Dougan G."/>
            <person name="Parkhill J."/>
        </authorList>
    </citation>
    <scope>NUCLEOTIDE SEQUENCE [LARGE SCALE GENOMIC DNA]</scope>
    <source>
        <strain>287/91 / NCTC 13346</strain>
    </source>
</reference>
<name>NANK_SALG2</name>
<sequence>MTTLAIDIGGTKLAAALIDKNLRISQRRELPTPASKTPDALREALKALVEPLRAEARQVAIASTGIIQEGMLLALNPHNLGGLLHFPLVQTLETIAGLPTLAVNDAQAAAWAEYHALPDDIRDMVFITVSTGVGGGVVCDCKLLTGKGGLAGHLGHTLADPHGPVCGCGRVGCVEAIASGRGMAAAARDDLAGCDAKTLFIRAGEGHQQARHLVSQSAQVIARMIADVKATTDCQCVVIGGSVGLAEGYLEQVRAFLMQEPAPYHVALSAARYRHDAGLLGAALLAQGDTL</sequence>
<comment type="function">
    <text evidence="1">Catalyzes the phosphorylation of N-acetylmannosamine (ManNAc) to ManNAc-6-P.</text>
</comment>
<comment type="catalytic activity">
    <reaction evidence="1">
        <text>an N-acyl-D-mannosamine + ATP = an N-acyl-D-mannosamine 6-phosphate + ADP + H(+)</text>
        <dbReference type="Rhea" id="RHEA:23832"/>
        <dbReference type="ChEBI" id="CHEBI:15378"/>
        <dbReference type="ChEBI" id="CHEBI:16062"/>
        <dbReference type="ChEBI" id="CHEBI:30616"/>
        <dbReference type="ChEBI" id="CHEBI:57666"/>
        <dbReference type="ChEBI" id="CHEBI:456216"/>
        <dbReference type="EC" id="2.7.1.60"/>
    </reaction>
</comment>
<comment type="pathway">
    <text evidence="1">Amino-sugar metabolism; N-acetylneuraminate degradation; D-fructose 6-phosphate from N-acetylneuraminate: step 2/5.</text>
</comment>
<comment type="subunit">
    <text evidence="1">Homodimer.</text>
</comment>
<comment type="similarity">
    <text evidence="1">Belongs to the ROK (NagC/XylR) family. NanK subfamily.</text>
</comment>
<dbReference type="EC" id="2.7.1.60" evidence="1"/>
<dbReference type="EMBL" id="AM933173">
    <property type="protein sequence ID" value="CAR39024.1"/>
    <property type="molecule type" value="Genomic_DNA"/>
</dbReference>
<dbReference type="RefSeq" id="WP_000208966.1">
    <property type="nucleotide sequence ID" value="NC_011274.1"/>
</dbReference>
<dbReference type="SMR" id="B5RET4"/>
<dbReference type="KEGG" id="seg:SG3226"/>
<dbReference type="HOGENOM" id="CLU_036604_0_4_6"/>
<dbReference type="UniPathway" id="UPA00629">
    <property type="reaction ID" value="UER00681"/>
</dbReference>
<dbReference type="Proteomes" id="UP000008321">
    <property type="component" value="Chromosome"/>
</dbReference>
<dbReference type="GO" id="GO:0005524">
    <property type="term" value="F:ATP binding"/>
    <property type="evidence" value="ECO:0007669"/>
    <property type="project" value="UniProtKB-UniRule"/>
</dbReference>
<dbReference type="GO" id="GO:0009384">
    <property type="term" value="F:N-acylmannosamine kinase activity"/>
    <property type="evidence" value="ECO:0007669"/>
    <property type="project" value="UniProtKB-UniRule"/>
</dbReference>
<dbReference type="GO" id="GO:0008270">
    <property type="term" value="F:zinc ion binding"/>
    <property type="evidence" value="ECO:0007669"/>
    <property type="project" value="UniProtKB-UniRule"/>
</dbReference>
<dbReference type="GO" id="GO:0019262">
    <property type="term" value="P:N-acetylneuraminate catabolic process"/>
    <property type="evidence" value="ECO:0007669"/>
    <property type="project" value="UniProtKB-UniRule"/>
</dbReference>
<dbReference type="FunFam" id="3.30.420.40:FF:000062">
    <property type="entry name" value="N-acetylmannosamine kinase"/>
    <property type="match status" value="1"/>
</dbReference>
<dbReference type="FunFam" id="3.30.420.40:FF:000063">
    <property type="entry name" value="N-acetylmannosamine kinase"/>
    <property type="match status" value="1"/>
</dbReference>
<dbReference type="Gene3D" id="3.30.420.40">
    <property type="match status" value="2"/>
</dbReference>
<dbReference type="HAMAP" id="MF_01234">
    <property type="entry name" value="ManNAc_kinase"/>
    <property type="match status" value="1"/>
</dbReference>
<dbReference type="InterPro" id="IPR043129">
    <property type="entry name" value="ATPase_NBD"/>
</dbReference>
<dbReference type="InterPro" id="IPR023945">
    <property type="entry name" value="ManNAc_kinase_bac"/>
</dbReference>
<dbReference type="InterPro" id="IPR000600">
    <property type="entry name" value="ROK"/>
</dbReference>
<dbReference type="InterPro" id="IPR049874">
    <property type="entry name" value="ROK_cs"/>
</dbReference>
<dbReference type="NCBIfam" id="NF047821">
    <property type="entry name" value="NactlManKinNanK"/>
    <property type="match status" value="1"/>
</dbReference>
<dbReference type="NCBIfam" id="NF003461">
    <property type="entry name" value="PRK05082.1"/>
    <property type="match status" value="1"/>
</dbReference>
<dbReference type="PANTHER" id="PTHR18964:SF169">
    <property type="entry name" value="N-ACETYLMANNOSAMINE KINASE"/>
    <property type="match status" value="1"/>
</dbReference>
<dbReference type="PANTHER" id="PTHR18964">
    <property type="entry name" value="ROK (REPRESSOR, ORF, KINASE) FAMILY"/>
    <property type="match status" value="1"/>
</dbReference>
<dbReference type="Pfam" id="PF00480">
    <property type="entry name" value="ROK"/>
    <property type="match status" value="1"/>
</dbReference>
<dbReference type="SUPFAM" id="SSF53067">
    <property type="entry name" value="Actin-like ATPase domain"/>
    <property type="match status" value="1"/>
</dbReference>
<dbReference type="PROSITE" id="PS01125">
    <property type="entry name" value="ROK"/>
    <property type="match status" value="1"/>
</dbReference>
<protein>
    <recommendedName>
        <fullName evidence="1">N-acetylmannosamine kinase</fullName>
        <ecNumber evidence="1">2.7.1.60</ecNumber>
    </recommendedName>
    <alternativeName>
        <fullName evidence="1">ManNAc kinase</fullName>
    </alternativeName>
    <alternativeName>
        <fullName evidence="1">N-acetyl-D-mannosamine kinase</fullName>
    </alternativeName>
</protein>
<proteinExistence type="inferred from homology"/>
<gene>
    <name evidence="1" type="primary">nanK</name>
    <name type="ordered locus">SG3226</name>
</gene>
<keyword id="KW-0067">ATP-binding</keyword>
<keyword id="KW-0119">Carbohydrate metabolism</keyword>
<keyword id="KW-0418">Kinase</keyword>
<keyword id="KW-0479">Metal-binding</keyword>
<keyword id="KW-0547">Nucleotide-binding</keyword>
<keyword id="KW-0808">Transferase</keyword>
<keyword id="KW-0862">Zinc</keyword>